<dbReference type="EC" id="7.6.2.1" evidence="9"/>
<dbReference type="EMBL" id="U75321">
    <property type="protein sequence ID" value="AAB18627.1"/>
    <property type="molecule type" value="mRNA"/>
</dbReference>
<dbReference type="EMBL" id="AK045367">
    <property type="protein sequence ID" value="BAC32330.1"/>
    <property type="molecule type" value="mRNA"/>
</dbReference>
<dbReference type="EMBL" id="AK141559">
    <property type="protein sequence ID" value="BAE24734.1"/>
    <property type="molecule type" value="mRNA"/>
</dbReference>
<dbReference type="EMBL" id="AC102916">
    <property type="status" value="NOT_ANNOTATED_CDS"/>
    <property type="molecule type" value="Genomic_DNA"/>
</dbReference>
<dbReference type="EMBL" id="AC123662">
    <property type="status" value="NOT_ANNOTATED_CDS"/>
    <property type="molecule type" value="Genomic_DNA"/>
</dbReference>
<dbReference type="EMBL" id="AC161516">
    <property type="status" value="NOT_ANNOTATED_CDS"/>
    <property type="molecule type" value="Genomic_DNA"/>
</dbReference>
<dbReference type="CCDS" id="CCDS39104.1">
    <molecule id="P70704-1"/>
</dbReference>
<dbReference type="CCDS" id="CCDS39105.1">
    <molecule id="P70704-2"/>
</dbReference>
<dbReference type="PIR" id="T30869">
    <property type="entry name" value="T30869"/>
</dbReference>
<dbReference type="RefSeq" id="NP_001034088.1">
    <molecule id="P70704-1"/>
    <property type="nucleotide sequence ID" value="NM_001038999.2"/>
</dbReference>
<dbReference type="RefSeq" id="NP_001271274.1">
    <property type="nucleotide sequence ID" value="NM_001284345.1"/>
</dbReference>
<dbReference type="RefSeq" id="NP_033857.1">
    <molecule id="P70704-2"/>
    <property type="nucleotide sequence ID" value="NM_009727.3"/>
</dbReference>
<dbReference type="RefSeq" id="XP_036020643.1">
    <molecule id="P70704-3"/>
    <property type="nucleotide sequence ID" value="XM_036164750.1"/>
</dbReference>
<dbReference type="SMR" id="P70704"/>
<dbReference type="BioGRID" id="198270">
    <property type="interactions" value="15"/>
</dbReference>
<dbReference type="FunCoup" id="P70704">
    <property type="interactions" value="2450"/>
</dbReference>
<dbReference type="IntAct" id="P70704">
    <property type="interactions" value="1"/>
</dbReference>
<dbReference type="STRING" id="10090.ENSMUSP00000042215"/>
<dbReference type="SwissLipids" id="SLP:000000333"/>
<dbReference type="GlyGen" id="P70704">
    <property type="glycosylation" value="2 sites, 1 N-linked glycan (1 site), 1 O-linked glycan (1 site)"/>
</dbReference>
<dbReference type="iPTMnet" id="P70704"/>
<dbReference type="PhosphoSitePlus" id="P70704"/>
<dbReference type="SwissPalm" id="P70704"/>
<dbReference type="jPOST" id="P70704"/>
<dbReference type="PaxDb" id="10090-ENSMUSP00000042215"/>
<dbReference type="PeptideAtlas" id="P70704"/>
<dbReference type="ProteomicsDB" id="265131">
    <molecule id="P70704-1"/>
</dbReference>
<dbReference type="ProteomicsDB" id="265132">
    <molecule id="P70704-2"/>
</dbReference>
<dbReference type="ProteomicsDB" id="265133">
    <molecule id="P70704-3"/>
</dbReference>
<dbReference type="Antibodypedia" id="43947">
    <property type="antibodies" value="89 antibodies from 19 providers"/>
</dbReference>
<dbReference type="DNASU" id="11980"/>
<dbReference type="Ensembl" id="ENSMUST00000037380.15">
    <molecule id="P70704-1"/>
    <property type="protein sequence ID" value="ENSMUSP00000042215.9"/>
    <property type="gene ID" value="ENSMUSG00000037685.16"/>
</dbReference>
<dbReference type="Ensembl" id="ENSMUST00000135930.8">
    <molecule id="P70704-2"/>
    <property type="protein sequence ID" value="ENSMUSP00000118379.3"/>
    <property type="gene ID" value="ENSMUSG00000037685.16"/>
</dbReference>
<dbReference type="GeneID" id="11980"/>
<dbReference type="KEGG" id="mmu:11980"/>
<dbReference type="UCSC" id="uc008xqa.2">
    <molecule id="P70704-1"/>
    <property type="organism name" value="mouse"/>
</dbReference>
<dbReference type="UCSC" id="uc008xqb.2">
    <molecule id="P70704-2"/>
    <property type="organism name" value="mouse"/>
</dbReference>
<dbReference type="AGR" id="MGI:1330848"/>
<dbReference type="CTD" id="10396"/>
<dbReference type="MGI" id="MGI:1330848">
    <property type="gene designation" value="Atp8a1"/>
</dbReference>
<dbReference type="VEuPathDB" id="HostDB:ENSMUSG00000037685"/>
<dbReference type="eggNOG" id="KOG0206">
    <property type="taxonomic scope" value="Eukaryota"/>
</dbReference>
<dbReference type="GeneTree" id="ENSGT00940000157110"/>
<dbReference type="HOGENOM" id="CLU_000846_3_2_1"/>
<dbReference type="InParanoid" id="P70704"/>
<dbReference type="OMA" id="MHSFWSW"/>
<dbReference type="OrthoDB" id="377733at2759"/>
<dbReference type="PhylomeDB" id="P70704"/>
<dbReference type="TreeFam" id="TF300654"/>
<dbReference type="BRENDA" id="7.6.2.1">
    <property type="organism ID" value="3474"/>
</dbReference>
<dbReference type="Reactome" id="R-MMU-6798695">
    <property type="pathway name" value="Neutrophil degranulation"/>
</dbReference>
<dbReference type="Reactome" id="R-MMU-936837">
    <property type="pathway name" value="Ion transport by P-type ATPases"/>
</dbReference>
<dbReference type="BioGRID-ORCS" id="11980">
    <property type="hits" value="3 hits in 79 CRISPR screens"/>
</dbReference>
<dbReference type="CD-CODE" id="CE726F99">
    <property type="entry name" value="Postsynaptic density"/>
</dbReference>
<dbReference type="ChiTaRS" id="Atp8a1">
    <property type="organism name" value="mouse"/>
</dbReference>
<dbReference type="PRO" id="PR:P70704"/>
<dbReference type="Proteomes" id="UP000000589">
    <property type="component" value="Chromosome 5"/>
</dbReference>
<dbReference type="RNAct" id="P70704">
    <property type="molecule type" value="protein"/>
</dbReference>
<dbReference type="Bgee" id="ENSMUSG00000037685">
    <property type="expression patterns" value="Expressed in left lung lobe and 268 other cell types or tissues"/>
</dbReference>
<dbReference type="ExpressionAtlas" id="P70704">
    <property type="expression patterns" value="baseline and differential"/>
</dbReference>
<dbReference type="GO" id="GO:0042584">
    <property type="term" value="C:chromaffin granule membrane"/>
    <property type="evidence" value="ECO:0007669"/>
    <property type="project" value="UniProtKB-SubCell"/>
</dbReference>
<dbReference type="GO" id="GO:0031410">
    <property type="term" value="C:cytoplasmic vesicle"/>
    <property type="evidence" value="ECO:0000314"/>
    <property type="project" value="UniProtKB"/>
</dbReference>
<dbReference type="GO" id="GO:0005829">
    <property type="term" value="C:cytosol"/>
    <property type="evidence" value="ECO:0007669"/>
    <property type="project" value="Ensembl"/>
</dbReference>
<dbReference type="GO" id="GO:0005783">
    <property type="term" value="C:endoplasmic reticulum"/>
    <property type="evidence" value="ECO:0007669"/>
    <property type="project" value="UniProtKB-SubCell"/>
</dbReference>
<dbReference type="GO" id="GO:0098978">
    <property type="term" value="C:glutamatergic synapse"/>
    <property type="evidence" value="ECO:0000314"/>
    <property type="project" value="SynGO"/>
</dbReference>
<dbReference type="GO" id="GO:0005794">
    <property type="term" value="C:Golgi apparatus"/>
    <property type="evidence" value="ECO:0007669"/>
    <property type="project" value="UniProtKB-SubCell"/>
</dbReference>
<dbReference type="GO" id="GO:0031090">
    <property type="term" value="C:organelle membrane"/>
    <property type="evidence" value="ECO:0000314"/>
    <property type="project" value="UniProtKB"/>
</dbReference>
<dbReference type="GO" id="GO:1990531">
    <property type="term" value="C:phospholipid-translocating ATPase complex"/>
    <property type="evidence" value="ECO:0000250"/>
    <property type="project" value="UniProtKB"/>
</dbReference>
<dbReference type="GO" id="GO:0005886">
    <property type="term" value="C:plasma membrane"/>
    <property type="evidence" value="ECO:0007669"/>
    <property type="project" value="UniProtKB-SubCell"/>
</dbReference>
<dbReference type="GO" id="GO:0045202">
    <property type="term" value="C:synapse"/>
    <property type="evidence" value="ECO:0000314"/>
    <property type="project" value="SynGO"/>
</dbReference>
<dbReference type="GO" id="GO:0030672">
    <property type="term" value="C:synaptic vesicle membrane"/>
    <property type="evidence" value="ECO:0000314"/>
    <property type="project" value="SynGO"/>
</dbReference>
<dbReference type="GO" id="GO:0005524">
    <property type="term" value="F:ATP binding"/>
    <property type="evidence" value="ECO:0007669"/>
    <property type="project" value="UniProtKB-KW"/>
</dbReference>
<dbReference type="GO" id="GO:0016887">
    <property type="term" value="F:ATP hydrolysis activity"/>
    <property type="evidence" value="ECO:0007669"/>
    <property type="project" value="InterPro"/>
</dbReference>
<dbReference type="GO" id="GO:0000287">
    <property type="term" value="F:magnesium ion binding"/>
    <property type="evidence" value="ECO:0007669"/>
    <property type="project" value="InterPro"/>
</dbReference>
<dbReference type="GO" id="GO:0140346">
    <property type="term" value="F:phosphatidylserine flippase activity"/>
    <property type="evidence" value="ECO:0000315"/>
    <property type="project" value="ARUK-UCL"/>
</dbReference>
<dbReference type="GO" id="GO:0090556">
    <property type="term" value="F:phosphatidylserine floppase activity"/>
    <property type="evidence" value="ECO:0007669"/>
    <property type="project" value="RHEA"/>
</dbReference>
<dbReference type="GO" id="GO:0140331">
    <property type="term" value="P:aminophospholipid translocation"/>
    <property type="evidence" value="ECO:0000315"/>
    <property type="project" value="ARUK-UCL"/>
</dbReference>
<dbReference type="GO" id="GO:0007612">
    <property type="term" value="P:learning"/>
    <property type="evidence" value="ECO:0000315"/>
    <property type="project" value="UniProtKB"/>
</dbReference>
<dbReference type="GO" id="GO:0030335">
    <property type="term" value="P:positive regulation of cell migration"/>
    <property type="evidence" value="ECO:0000315"/>
    <property type="project" value="UniProtKB"/>
</dbReference>
<dbReference type="GO" id="GO:0061092">
    <property type="term" value="P:positive regulation of phospholipid translocation"/>
    <property type="evidence" value="ECO:0000314"/>
    <property type="project" value="UniProtKB"/>
</dbReference>
<dbReference type="GO" id="GO:0048488">
    <property type="term" value="P:synaptic vesicle endocytosis"/>
    <property type="evidence" value="ECO:0000314"/>
    <property type="project" value="SynGO"/>
</dbReference>
<dbReference type="CDD" id="cd02073">
    <property type="entry name" value="P-type_ATPase_APLT_Dnf-like"/>
    <property type="match status" value="1"/>
</dbReference>
<dbReference type="FunFam" id="2.70.150.10:FF:000021">
    <property type="entry name" value="Phospholipid-transporting ATPase"/>
    <property type="match status" value="1"/>
</dbReference>
<dbReference type="FunFam" id="3.40.1110.10:FF:000266">
    <property type="entry name" value="Phospholipid-transporting ATPase"/>
    <property type="match status" value="1"/>
</dbReference>
<dbReference type="FunFam" id="3.40.50.1000:FF:000010">
    <property type="entry name" value="Phospholipid-transporting ATPase"/>
    <property type="match status" value="1"/>
</dbReference>
<dbReference type="Gene3D" id="3.40.1110.10">
    <property type="entry name" value="Calcium-transporting ATPase, cytoplasmic domain N"/>
    <property type="match status" value="1"/>
</dbReference>
<dbReference type="Gene3D" id="2.70.150.10">
    <property type="entry name" value="Calcium-transporting ATPase, cytoplasmic transduction domain A"/>
    <property type="match status" value="1"/>
</dbReference>
<dbReference type="Gene3D" id="3.40.50.1000">
    <property type="entry name" value="HAD superfamily/HAD-like"/>
    <property type="match status" value="1"/>
</dbReference>
<dbReference type="InterPro" id="IPR023299">
    <property type="entry name" value="ATPase_P-typ_cyto_dom_N"/>
</dbReference>
<dbReference type="InterPro" id="IPR018303">
    <property type="entry name" value="ATPase_P-typ_P_site"/>
</dbReference>
<dbReference type="InterPro" id="IPR023298">
    <property type="entry name" value="ATPase_P-typ_TM_dom_sf"/>
</dbReference>
<dbReference type="InterPro" id="IPR008250">
    <property type="entry name" value="ATPase_P-typ_transduc_dom_A_sf"/>
</dbReference>
<dbReference type="InterPro" id="IPR036412">
    <property type="entry name" value="HAD-like_sf"/>
</dbReference>
<dbReference type="InterPro" id="IPR023214">
    <property type="entry name" value="HAD_sf"/>
</dbReference>
<dbReference type="InterPro" id="IPR006539">
    <property type="entry name" value="P-type_ATPase_IV"/>
</dbReference>
<dbReference type="InterPro" id="IPR032631">
    <property type="entry name" value="P-type_ATPase_N"/>
</dbReference>
<dbReference type="InterPro" id="IPR001757">
    <property type="entry name" value="P_typ_ATPase"/>
</dbReference>
<dbReference type="InterPro" id="IPR032630">
    <property type="entry name" value="P_typ_ATPase_c"/>
</dbReference>
<dbReference type="InterPro" id="IPR044492">
    <property type="entry name" value="P_typ_ATPase_HD_dom"/>
</dbReference>
<dbReference type="NCBIfam" id="TIGR01652">
    <property type="entry name" value="ATPase-Plipid"/>
    <property type="match status" value="1"/>
</dbReference>
<dbReference type="NCBIfam" id="TIGR01494">
    <property type="entry name" value="ATPase_P-type"/>
    <property type="match status" value="3"/>
</dbReference>
<dbReference type="PANTHER" id="PTHR24092:SF221">
    <property type="entry name" value="PHOSPHOLIPID-TRANSPORTING ATPASE IA"/>
    <property type="match status" value="1"/>
</dbReference>
<dbReference type="PANTHER" id="PTHR24092">
    <property type="entry name" value="PROBABLE PHOSPHOLIPID-TRANSPORTING ATPASE"/>
    <property type="match status" value="1"/>
</dbReference>
<dbReference type="Pfam" id="PF13246">
    <property type="entry name" value="Cation_ATPase"/>
    <property type="match status" value="1"/>
</dbReference>
<dbReference type="Pfam" id="PF00122">
    <property type="entry name" value="E1-E2_ATPase"/>
    <property type="match status" value="1"/>
</dbReference>
<dbReference type="Pfam" id="PF16212">
    <property type="entry name" value="PhoLip_ATPase_C"/>
    <property type="match status" value="1"/>
</dbReference>
<dbReference type="Pfam" id="PF16209">
    <property type="entry name" value="PhoLip_ATPase_N"/>
    <property type="match status" value="1"/>
</dbReference>
<dbReference type="PRINTS" id="PR00119">
    <property type="entry name" value="CATATPASE"/>
</dbReference>
<dbReference type="SFLD" id="SFLDG00002">
    <property type="entry name" value="C1.7:_P-type_atpase_like"/>
    <property type="match status" value="1"/>
</dbReference>
<dbReference type="SFLD" id="SFLDF00027">
    <property type="entry name" value="p-type_atpase"/>
    <property type="match status" value="1"/>
</dbReference>
<dbReference type="SUPFAM" id="SSF81653">
    <property type="entry name" value="Calcium ATPase, transduction domain A"/>
    <property type="match status" value="1"/>
</dbReference>
<dbReference type="SUPFAM" id="SSF81665">
    <property type="entry name" value="Calcium ATPase, transmembrane domain M"/>
    <property type="match status" value="1"/>
</dbReference>
<dbReference type="SUPFAM" id="SSF56784">
    <property type="entry name" value="HAD-like"/>
    <property type="match status" value="1"/>
</dbReference>
<dbReference type="SUPFAM" id="SSF81660">
    <property type="entry name" value="Metal cation-transporting ATPase, ATP-binding domain N"/>
    <property type="match status" value="1"/>
</dbReference>
<dbReference type="PROSITE" id="PS00154">
    <property type="entry name" value="ATPASE_E1_E2"/>
    <property type="match status" value="1"/>
</dbReference>
<proteinExistence type="evidence at protein level"/>
<accession>P70704</accession>
<accession>Q8BR88</accession>
<evidence type="ECO:0000250" key="1"/>
<evidence type="ECO:0000250" key="2">
    <source>
        <dbReference type="UniProtKB" id="C7EXK4"/>
    </source>
</evidence>
<evidence type="ECO:0000250" key="3">
    <source>
        <dbReference type="UniProtKB" id="P04191"/>
    </source>
</evidence>
<evidence type="ECO:0000250" key="4">
    <source>
        <dbReference type="UniProtKB" id="Q8NB49"/>
    </source>
</evidence>
<evidence type="ECO:0000250" key="5">
    <source>
        <dbReference type="UniProtKB" id="Q9Y2Q0"/>
    </source>
</evidence>
<evidence type="ECO:0000255" key="6"/>
<evidence type="ECO:0000269" key="7">
    <source>
    </source>
</evidence>
<evidence type="ECO:0000269" key="8">
    <source>
    </source>
</evidence>
<evidence type="ECO:0000269" key="9">
    <source>
    </source>
</evidence>
<evidence type="ECO:0000269" key="10">
    <source>
    </source>
</evidence>
<evidence type="ECO:0000269" key="11">
    <source>
    </source>
</evidence>
<evidence type="ECO:0000269" key="12">
    <source>
    </source>
</evidence>
<evidence type="ECO:0000269" key="13">
    <source>
    </source>
</evidence>
<evidence type="ECO:0000303" key="14">
    <source>
    </source>
</evidence>
<evidence type="ECO:0000305" key="15"/>
<evidence type="ECO:0000305" key="16">
    <source>
    </source>
</evidence>
<evidence type="ECO:0000305" key="17">
    <source>
    </source>
</evidence>
<evidence type="ECO:0000305" key="18">
    <source>
    </source>
</evidence>
<evidence type="ECO:0000312" key="19">
    <source>
        <dbReference type="MGI" id="MGI:1330848"/>
    </source>
</evidence>
<evidence type="ECO:0007744" key="20">
    <source>
    </source>
</evidence>
<evidence type="ECO:0007744" key="21">
    <source>
    </source>
</evidence>
<evidence type="ECO:0007744" key="22">
    <source>
    </source>
</evidence>
<gene>
    <name evidence="19" type="primary">Atp8a1</name>
    <name type="synonym">Atpc1</name>
</gene>
<feature type="chain" id="PRO_0000046361" description="Phospholipid-transporting ATPase IA">
    <location>
        <begin position="1"/>
        <end position="1164"/>
    </location>
</feature>
<feature type="topological domain" description="Cytoplasmic" evidence="6">
    <location>
        <begin position="1"/>
        <end position="75"/>
    </location>
</feature>
<feature type="transmembrane region" description="Helical" evidence="6">
    <location>
        <begin position="76"/>
        <end position="96"/>
    </location>
</feature>
<feature type="topological domain" description="Exoplasmic loop" evidence="6">
    <location>
        <begin position="97"/>
        <end position="100"/>
    </location>
</feature>
<feature type="transmembrane region" description="Helical" evidence="6">
    <location>
        <begin position="101"/>
        <end position="121"/>
    </location>
</feature>
<feature type="topological domain" description="Cytoplasmic" evidence="6">
    <location>
        <begin position="122"/>
        <end position="297"/>
    </location>
</feature>
<feature type="transmembrane region" description="Helical" evidence="6">
    <location>
        <begin position="298"/>
        <end position="318"/>
    </location>
</feature>
<feature type="topological domain" description="Exoplasmic loop" evidence="6">
    <location>
        <begin position="319"/>
        <end position="339"/>
    </location>
</feature>
<feature type="transmembrane region" description="Helical" evidence="6">
    <location>
        <begin position="340"/>
        <end position="360"/>
    </location>
</feature>
<feature type="topological domain" description="Cytoplasmic" evidence="6">
    <location>
        <begin position="361"/>
        <end position="866"/>
    </location>
</feature>
<feature type="transmembrane region" description="Helical" evidence="6">
    <location>
        <begin position="867"/>
        <end position="887"/>
    </location>
</feature>
<feature type="topological domain" description="Exoplasmic loop" evidence="6">
    <location>
        <begin position="888"/>
        <end position="890"/>
    </location>
</feature>
<feature type="transmembrane region" description="Helical" evidence="6">
    <location>
        <begin position="891"/>
        <end position="911"/>
    </location>
</feature>
<feature type="topological domain" description="Cytoplasmic" evidence="6">
    <location>
        <begin position="912"/>
        <end position="939"/>
    </location>
</feature>
<feature type="transmembrane region" description="Helical" evidence="6">
    <location>
        <begin position="940"/>
        <end position="960"/>
    </location>
</feature>
<feature type="topological domain" description="Exoplasmic loop" evidence="6">
    <location>
        <begin position="961"/>
        <end position="977"/>
    </location>
</feature>
<feature type="transmembrane region" description="Helical" evidence="6">
    <location>
        <begin position="978"/>
        <end position="998"/>
    </location>
</feature>
<feature type="topological domain" description="Cytoplasmic" evidence="6">
    <location>
        <begin position="999"/>
        <end position="1008"/>
    </location>
</feature>
<feature type="transmembrane region" description="Helical" evidence="6">
    <location>
        <begin position="1009"/>
        <end position="1029"/>
    </location>
</feature>
<feature type="topological domain" description="Exoplasmic loop" evidence="6">
    <location>
        <begin position="1030"/>
        <end position="1044"/>
    </location>
</feature>
<feature type="transmembrane region" description="Helical" evidence="6">
    <location>
        <begin position="1045"/>
        <end position="1065"/>
    </location>
</feature>
<feature type="topological domain" description="Cytoplasmic" evidence="6">
    <location>
        <begin position="1066"/>
        <end position="1164"/>
    </location>
</feature>
<feature type="active site" description="4-aspartylphosphate intermediate" evidence="5">
    <location>
        <position position="409"/>
    </location>
</feature>
<feature type="binding site" evidence="5">
    <location>
        <position position="409"/>
    </location>
    <ligand>
        <name>ATP</name>
        <dbReference type="ChEBI" id="CHEBI:30616"/>
    </ligand>
</feature>
<feature type="binding site" evidence="5">
    <location>
        <position position="409"/>
    </location>
    <ligand>
        <name>Mg(2+)</name>
        <dbReference type="ChEBI" id="CHEBI:18420"/>
    </ligand>
</feature>
<feature type="binding site" evidence="5">
    <location>
        <position position="410"/>
    </location>
    <ligand>
        <name>ATP</name>
        <dbReference type="ChEBI" id="CHEBI:30616"/>
    </ligand>
</feature>
<feature type="binding site" evidence="3">
    <location>
        <position position="411"/>
    </location>
    <ligand>
        <name>ATP</name>
        <dbReference type="ChEBI" id="CHEBI:30616"/>
    </ligand>
</feature>
<feature type="binding site" evidence="5">
    <location>
        <position position="411"/>
    </location>
    <ligand>
        <name>Mg(2+)</name>
        <dbReference type="ChEBI" id="CHEBI:18420"/>
    </ligand>
</feature>
<feature type="binding site" evidence="3">
    <location>
        <position position="508"/>
    </location>
    <ligand>
        <name>ATP</name>
        <dbReference type="ChEBI" id="CHEBI:30616"/>
    </ligand>
</feature>
<feature type="binding site" evidence="5">
    <location>
        <position position="549"/>
    </location>
    <ligand>
        <name>ATP</name>
        <dbReference type="ChEBI" id="CHEBI:30616"/>
    </ligand>
</feature>
<feature type="binding site" evidence="3">
    <location>
        <position position="572"/>
    </location>
    <ligand>
        <name>ATP</name>
        <dbReference type="ChEBI" id="CHEBI:30616"/>
    </ligand>
</feature>
<feature type="binding site" evidence="3">
    <location>
        <position position="605"/>
    </location>
    <ligand>
        <name>ATP</name>
        <dbReference type="ChEBI" id="CHEBI:30616"/>
    </ligand>
</feature>
<feature type="binding site" evidence="3">
    <location>
        <position position="685"/>
    </location>
    <ligand>
        <name>ATP</name>
        <dbReference type="ChEBI" id="CHEBI:30616"/>
    </ligand>
</feature>
<feature type="binding site" evidence="3">
    <location>
        <position position="686"/>
    </location>
    <ligand>
        <name>ATP</name>
        <dbReference type="ChEBI" id="CHEBI:30616"/>
    </ligand>
</feature>
<feature type="binding site" evidence="3">
    <location>
        <position position="687"/>
    </location>
    <ligand>
        <name>ATP</name>
        <dbReference type="ChEBI" id="CHEBI:30616"/>
    </ligand>
</feature>
<feature type="binding site" evidence="6">
    <location>
        <begin position="741"/>
        <end position="748"/>
    </location>
    <ligand>
        <name>ATP</name>
        <dbReference type="ChEBI" id="CHEBI:30616"/>
    </ligand>
</feature>
<feature type="binding site" evidence="3">
    <location>
        <position position="775"/>
    </location>
    <ligand>
        <name>ATP</name>
        <dbReference type="ChEBI" id="CHEBI:30616"/>
    </ligand>
</feature>
<feature type="binding site" evidence="3">
    <location>
        <position position="781"/>
    </location>
    <ligand>
        <name>ATP</name>
        <dbReference type="ChEBI" id="CHEBI:30616"/>
    </ligand>
</feature>
<feature type="binding site" evidence="5">
    <location>
        <position position="801"/>
    </location>
    <ligand>
        <name>Mg(2+)</name>
        <dbReference type="ChEBI" id="CHEBI:18420"/>
    </ligand>
</feature>
<feature type="binding site" evidence="5">
    <location>
        <position position="804"/>
    </location>
    <ligand>
        <name>ATP</name>
        <dbReference type="ChEBI" id="CHEBI:30616"/>
    </ligand>
</feature>
<feature type="binding site" evidence="5">
    <location>
        <position position="805"/>
    </location>
    <ligand>
        <name>ATP</name>
        <dbReference type="ChEBI" id="CHEBI:30616"/>
    </ligand>
</feature>
<feature type="binding site" evidence="4">
    <location>
        <position position="805"/>
    </location>
    <ligand>
        <name>Mg(2+)</name>
        <dbReference type="ChEBI" id="CHEBI:18420"/>
    </ligand>
</feature>
<feature type="binding site" evidence="6">
    <location>
        <begin position="1095"/>
        <end position="1102"/>
    </location>
    <ligand>
        <name>ATP</name>
        <dbReference type="ChEBI" id="CHEBI:30616"/>
    </ligand>
</feature>
<feature type="site" description="Cleavage; by calpain" evidence="18">
    <location>
        <position position="139"/>
    </location>
</feature>
<feature type="site" description="Involved in the recognition of the lipid substrate on the exoplasmic side" evidence="2">
    <location>
        <position position="352"/>
    </location>
</feature>
<feature type="site" description="Involved in the release of the transported lipid into the cytosolic leaflet" evidence="2">
    <location>
        <position position="357"/>
    </location>
</feature>
<feature type="modified residue" description="Phosphoserine" evidence="21 22">
    <location>
        <position position="25"/>
    </location>
</feature>
<feature type="modified residue" description="Phosphothreonine" evidence="20 21 22">
    <location>
        <position position="28"/>
    </location>
</feature>
<feature type="modified residue" description="Phosphoserine" evidence="20 21 22">
    <location>
        <position position="29"/>
    </location>
</feature>
<feature type="modified residue" description="Phosphoserine" evidence="22">
    <location>
        <position position="443"/>
    </location>
</feature>
<feature type="modified residue" description="Phosphoserine" evidence="22">
    <location>
        <position position="1126"/>
    </location>
</feature>
<feature type="splice variant" id="VSP_055306" description="In isoform 2." evidence="14">
    <original>AVGEIVKVTNGEHLPADLLS</original>
    <variation>NVGDIVIIKGKEYIPADTVL</variation>
    <location>
        <begin position="152"/>
        <end position="171"/>
    </location>
</feature>
<feature type="splice variant" id="VSP_055307" description="In isoform 2 and isoform 3." evidence="14">
    <location>
        <begin position="433"/>
        <end position="447"/>
    </location>
</feature>
<feature type="mutagenesis site" description="Decreases plasma membrane aminophospholipid translocation in neuronal cells." evidence="10">
    <original>D</original>
    <variation>K</variation>
    <location>
        <position position="409"/>
    </location>
</feature>
<sequence>MPTMRRTVSEIRSRAEGYEKTDDVSEKTSLADQEEVRTIFINQPQLTKFCNNHVSTAKYNVITFLPRFLYSQFRRAANSFFLFIALLQQIPDVSPTGRYTTLVPLLFILAVAAIKEIIEDIKRHKADNAVNKKQTQVLRNGAWEIVHWEKVAVGEIVKVTNGEHLPADLLSLSSSEPQAMCYIETSNLDGETNLKIRQGLPATSDIKDIDSLMRISGRIECESPNRHLYDFVGNIRLDGHGTVPLGADQILLRGAQLRNTQWVHGIVVYTGHDTKLMQNSTSPPLKLSNVERITNVQILILFCILIAMSLVCSVGSAIWNRRHSGKDWYLHLHYGGASNFGLNFLTFIILFNNLIPISLLVTLEVVKFTQAYFINWDLDMHYEPTDTAAMARTSNLNEELGQVKYIFSDKTGTLTCNVMQFKKCTIAGVAYGHVPEPEDYGCSPDEWQSSQFGDEKTFNDPSLLDNLQNNHPTAPIICEFLTMMAVCHTAVPEREGDKIIYQAASPDEGALVRAAKQLNFVFTGRTPDSVIIDSLGQEERYELLNVLEFTSARKRMSVVVRTPSGKLRLYCKGADTVIYERLAETSKYKEITLKHLEQFATEGLRTLCFAVAEISESDFEEWRAVYHRASTSVQNRLLKLEESYELIEKNLQLLGATAIEDKLQDQVPETIETLMKADIKIWILTGDKQETAINIGHSCRLLKRNMGMIVINEGSLDGTRETLSRHCTTLGDALRKENDFALIIDGKTLKYALTFGVRQYFLDLALSCKAVICCRVSPLQKSEVVEMVKKQVKVITLAIGDGANDVSMIQTAHVGVGISGNEGLQAANSSDYSIAQFKYLKNLLMVHGAWNYNRVSKCILYCFYKNIVLYIIEIWFAFVNGFSGQILFERWCIGLYNVMFTAMPPLTLGIFERSCRKENMLKYPELYKTSQNALDFNTKVFWVHCLNGLFHSVILFWFPLKALQYGTVFGNGKTSDYLLLGNFVYTFVVITVCLKAGLETSYWTWFSHIAIWGSIALWVVFFGIYSSLWPAVPMAPDMSGEAAMLFSSGVFWVGLLSIPVASLLLDVLYKVIKRTAFKTLVDEVQELEAKSQDPGAVVLGKSLTERAQLLKNVFKKNHVNLYRSESLQQNLLHGYAFSQDENGIVSQSEVIRAYDTTKQRPDEW</sequence>
<reference key="1">
    <citation type="journal article" date="1998" name="Genome Res.">
        <title>Multiple members of a third subfamily of P-type ATPases identified by genomic sequences and ESTs.</title>
        <authorList>
            <person name="Halleck M.S."/>
            <person name="Pradhan D."/>
            <person name="Blackman C.F."/>
            <person name="Berkes C."/>
            <person name="Williamson P.L."/>
            <person name="Schlegel R.A."/>
        </authorList>
    </citation>
    <scope>NUCLEOTIDE SEQUENCE [MRNA] (ISOFORM 2)</scope>
    <source>
        <tissue>Teratocarcinoma</tissue>
    </source>
</reference>
<reference key="2">
    <citation type="journal article" date="2005" name="Science">
        <title>The transcriptional landscape of the mammalian genome.</title>
        <authorList>
            <person name="Carninci P."/>
            <person name="Kasukawa T."/>
            <person name="Katayama S."/>
            <person name="Gough J."/>
            <person name="Frith M.C."/>
            <person name="Maeda N."/>
            <person name="Oyama R."/>
            <person name="Ravasi T."/>
            <person name="Lenhard B."/>
            <person name="Wells C."/>
            <person name="Kodzius R."/>
            <person name="Shimokawa K."/>
            <person name="Bajic V.B."/>
            <person name="Brenner S.E."/>
            <person name="Batalov S."/>
            <person name="Forrest A.R."/>
            <person name="Zavolan M."/>
            <person name="Davis M.J."/>
            <person name="Wilming L.G."/>
            <person name="Aidinis V."/>
            <person name="Allen J.E."/>
            <person name="Ambesi-Impiombato A."/>
            <person name="Apweiler R."/>
            <person name="Aturaliya R.N."/>
            <person name="Bailey T.L."/>
            <person name="Bansal M."/>
            <person name="Baxter L."/>
            <person name="Beisel K.W."/>
            <person name="Bersano T."/>
            <person name="Bono H."/>
            <person name="Chalk A.M."/>
            <person name="Chiu K.P."/>
            <person name="Choudhary V."/>
            <person name="Christoffels A."/>
            <person name="Clutterbuck D.R."/>
            <person name="Crowe M.L."/>
            <person name="Dalla E."/>
            <person name="Dalrymple B.P."/>
            <person name="de Bono B."/>
            <person name="Della Gatta G."/>
            <person name="di Bernardo D."/>
            <person name="Down T."/>
            <person name="Engstrom P."/>
            <person name="Fagiolini M."/>
            <person name="Faulkner G."/>
            <person name="Fletcher C.F."/>
            <person name="Fukushima T."/>
            <person name="Furuno M."/>
            <person name="Futaki S."/>
            <person name="Gariboldi M."/>
            <person name="Georgii-Hemming P."/>
            <person name="Gingeras T.R."/>
            <person name="Gojobori T."/>
            <person name="Green R.E."/>
            <person name="Gustincich S."/>
            <person name="Harbers M."/>
            <person name="Hayashi Y."/>
            <person name="Hensch T.K."/>
            <person name="Hirokawa N."/>
            <person name="Hill D."/>
            <person name="Huminiecki L."/>
            <person name="Iacono M."/>
            <person name="Ikeo K."/>
            <person name="Iwama A."/>
            <person name="Ishikawa T."/>
            <person name="Jakt M."/>
            <person name="Kanapin A."/>
            <person name="Katoh M."/>
            <person name="Kawasawa Y."/>
            <person name="Kelso J."/>
            <person name="Kitamura H."/>
            <person name="Kitano H."/>
            <person name="Kollias G."/>
            <person name="Krishnan S.P."/>
            <person name="Kruger A."/>
            <person name="Kummerfeld S.K."/>
            <person name="Kurochkin I.V."/>
            <person name="Lareau L.F."/>
            <person name="Lazarevic D."/>
            <person name="Lipovich L."/>
            <person name="Liu J."/>
            <person name="Liuni S."/>
            <person name="McWilliam S."/>
            <person name="Madan Babu M."/>
            <person name="Madera M."/>
            <person name="Marchionni L."/>
            <person name="Matsuda H."/>
            <person name="Matsuzawa S."/>
            <person name="Miki H."/>
            <person name="Mignone F."/>
            <person name="Miyake S."/>
            <person name="Morris K."/>
            <person name="Mottagui-Tabar S."/>
            <person name="Mulder N."/>
            <person name="Nakano N."/>
            <person name="Nakauchi H."/>
            <person name="Ng P."/>
            <person name="Nilsson R."/>
            <person name="Nishiguchi S."/>
            <person name="Nishikawa S."/>
            <person name="Nori F."/>
            <person name="Ohara O."/>
            <person name="Okazaki Y."/>
            <person name="Orlando V."/>
            <person name="Pang K.C."/>
            <person name="Pavan W.J."/>
            <person name="Pavesi G."/>
            <person name="Pesole G."/>
            <person name="Petrovsky N."/>
            <person name="Piazza S."/>
            <person name="Reed J."/>
            <person name="Reid J.F."/>
            <person name="Ring B.Z."/>
            <person name="Ringwald M."/>
            <person name="Rost B."/>
            <person name="Ruan Y."/>
            <person name="Salzberg S.L."/>
            <person name="Sandelin A."/>
            <person name="Schneider C."/>
            <person name="Schoenbach C."/>
            <person name="Sekiguchi K."/>
            <person name="Semple C.A."/>
            <person name="Seno S."/>
            <person name="Sessa L."/>
            <person name="Sheng Y."/>
            <person name="Shibata Y."/>
            <person name="Shimada H."/>
            <person name="Shimada K."/>
            <person name="Silva D."/>
            <person name="Sinclair B."/>
            <person name="Sperling S."/>
            <person name="Stupka E."/>
            <person name="Sugiura K."/>
            <person name="Sultana R."/>
            <person name="Takenaka Y."/>
            <person name="Taki K."/>
            <person name="Tammoja K."/>
            <person name="Tan S.L."/>
            <person name="Tang S."/>
            <person name="Taylor M.S."/>
            <person name="Tegner J."/>
            <person name="Teichmann S.A."/>
            <person name="Ueda H.R."/>
            <person name="van Nimwegen E."/>
            <person name="Verardo R."/>
            <person name="Wei C.L."/>
            <person name="Yagi K."/>
            <person name="Yamanishi H."/>
            <person name="Zabarovsky E."/>
            <person name="Zhu S."/>
            <person name="Zimmer A."/>
            <person name="Hide W."/>
            <person name="Bult C."/>
            <person name="Grimmond S.M."/>
            <person name="Teasdale R.D."/>
            <person name="Liu E.T."/>
            <person name="Brusic V."/>
            <person name="Quackenbush J."/>
            <person name="Wahlestedt C."/>
            <person name="Mattick J.S."/>
            <person name="Hume D.A."/>
            <person name="Kai C."/>
            <person name="Sasaki D."/>
            <person name="Tomaru Y."/>
            <person name="Fukuda S."/>
            <person name="Kanamori-Katayama M."/>
            <person name="Suzuki M."/>
            <person name="Aoki J."/>
            <person name="Arakawa T."/>
            <person name="Iida J."/>
            <person name="Imamura K."/>
            <person name="Itoh M."/>
            <person name="Kato T."/>
            <person name="Kawaji H."/>
            <person name="Kawagashira N."/>
            <person name="Kawashima T."/>
            <person name="Kojima M."/>
            <person name="Kondo S."/>
            <person name="Konno H."/>
            <person name="Nakano K."/>
            <person name="Ninomiya N."/>
            <person name="Nishio T."/>
            <person name="Okada M."/>
            <person name="Plessy C."/>
            <person name="Shibata K."/>
            <person name="Shiraki T."/>
            <person name="Suzuki S."/>
            <person name="Tagami M."/>
            <person name="Waki K."/>
            <person name="Watahiki A."/>
            <person name="Okamura-Oho Y."/>
            <person name="Suzuki H."/>
            <person name="Kawai J."/>
            <person name="Hayashizaki Y."/>
        </authorList>
    </citation>
    <scope>NUCLEOTIDE SEQUENCE [LARGE SCALE MRNA] (ISOFORM 1)</scope>
</reference>
<reference key="3">
    <citation type="journal article" date="2009" name="PLoS Biol.">
        <title>Lineage-specific biology revealed by a finished genome assembly of the mouse.</title>
        <authorList>
            <person name="Church D.M."/>
            <person name="Goodstadt L."/>
            <person name="Hillier L.W."/>
            <person name="Zody M.C."/>
            <person name="Goldstein S."/>
            <person name="She X."/>
            <person name="Bult C.J."/>
            <person name="Agarwala R."/>
            <person name="Cherry J.L."/>
            <person name="DiCuccio M."/>
            <person name="Hlavina W."/>
            <person name="Kapustin Y."/>
            <person name="Meric P."/>
            <person name="Maglott D."/>
            <person name="Birtle Z."/>
            <person name="Marques A.C."/>
            <person name="Graves T."/>
            <person name="Zhou S."/>
            <person name="Teague B."/>
            <person name="Potamousis K."/>
            <person name="Churas C."/>
            <person name="Place M."/>
            <person name="Herschleb J."/>
            <person name="Runnheim R."/>
            <person name="Forrest D."/>
            <person name="Amos-Landgraf J."/>
            <person name="Schwartz D.C."/>
            <person name="Cheng Z."/>
            <person name="Lindblad-Toh K."/>
            <person name="Eichler E.E."/>
            <person name="Ponting C.P."/>
        </authorList>
    </citation>
    <scope>NUCLEOTIDE SEQUENCE [LARGE SCALE GENOMIC DNA]</scope>
    <source>
        <strain>C57BL/6J</strain>
    </source>
</reference>
<reference key="4">
    <citation type="journal article" date="2006" name="Biochemistry">
        <title>Lipid specific activation of the murine P4-ATPase Atp8a1 (ATPase II).</title>
        <authorList>
            <person name="Paterson J.K."/>
            <person name="Renkema K."/>
            <person name="Burden L."/>
            <person name="Halleck M.S."/>
            <person name="Schlegel R.A."/>
            <person name="Williamson P."/>
            <person name="Daleke D.L."/>
        </authorList>
    </citation>
    <scope>FUNCTION</scope>
    <scope>ACTIVITY REGULATION</scope>
</reference>
<reference key="5">
    <citation type="journal article" date="2006" name="Br. J. Haematol.">
        <title>Identification of an erythroid ATP-dependent aminophospholipid transporter.</title>
        <authorList>
            <person name="Soupene E."/>
            <person name="Kuypers F.A."/>
        </authorList>
    </citation>
    <scope>ALTERNATIVE SPLICING</scope>
    <scope>TISSUE SPECIFICITY</scope>
    <scope>SUBCELLULAR LOCATION</scope>
</reference>
<reference key="6">
    <citation type="journal article" date="2007" name="Proc. Natl. Acad. Sci. U.S.A.">
        <title>Large-scale phosphorylation analysis of mouse liver.</title>
        <authorList>
            <person name="Villen J."/>
            <person name="Beausoleil S.A."/>
            <person name="Gerber S.A."/>
            <person name="Gygi S.P."/>
        </authorList>
    </citation>
    <scope>PHOSPHORYLATION [LARGE SCALE ANALYSIS] AT THR-28 AND SER-29</scope>
    <scope>IDENTIFICATION BY MASS SPECTROMETRY [LARGE SCALE ANALYSIS]</scope>
    <source>
        <tissue>Liver</tissue>
    </source>
</reference>
<reference key="7">
    <citation type="journal article" date="2008" name="J. Recept. Lig. Chann. Res.">
        <title>ATP8A1 activity and phosphatidylserine transbilayer movement.</title>
        <authorList>
            <person name="Soupene E."/>
            <person name="Kemaladewi D.U."/>
            <person name="Kuypers F.A."/>
        </authorList>
    </citation>
    <scope>FUNCTION</scope>
    <scope>CATALYTIC ACTIVITY</scope>
    <scope>ACTIVITY REGULATION</scope>
    <scope>SUBCELLULAR LOCATION</scope>
</reference>
<reference key="8">
    <citation type="journal article" date="2009" name="Immunity">
        <title>The phagosomal proteome in interferon-gamma-activated macrophages.</title>
        <authorList>
            <person name="Trost M."/>
            <person name="English L."/>
            <person name="Lemieux S."/>
            <person name="Courcelles M."/>
            <person name="Desjardins M."/>
            <person name="Thibault P."/>
        </authorList>
    </citation>
    <scope>PHOSPHORYLATION [LARGE SCALE ANALYSIS] AT SER-25; THR-28 AND SER-29</scope>
    <scope>IDENTIFICATION BY MASS SPECTROMETRY [LARGE SCALE ANALYSIS]</scope>
</reference>
<reference key="9">
    <citation type="journal article" date="2010" name="Cell">
        <title>A tissue-specific atlas of mouse protein phosphorylation and expression.</title>
        <authorList>
            <person name="Huttlin E.L."/>
            <person name="Jedrychowski M.P."/>
            <person name="Elias J.E."/>
            <person name="Goswami T."/>
            <person name="Rad R."/>
            <person name="Beausoleil S.A."/>
            <person name="Villen J."/>
            <person name="Haas W."/>
            <person name="Sowa M.E."/>
            <person name="Gygi S.P."/>
        </authorList>
    </citation>
    <scope>PHOSPHORYLATION [LARGE SCALE ANALYSIS] AT SER-25; THR-28; SER-29; SER-443 AND SER-1126</scope>
    <scope>IDENTIFICATION BY MASS SPECTROMETRY [LARGE SCALE ANALYSIS]</scope>
    <source>
        <tissue>Brain</tissue>
        <tissue>Brown adipose tissue</tissue>
        <tissue>Heart</tissue>
        <tissue>Kidney</tissue>
        <tissue>Lung</tissue>
        <tissue>Spleen</tissue>
    </source>
</reference>
<reference key="10">
    <citation type="journal article" date="2012" name="J. Neurochem.">
        <title>Atp8a1 deficiency is associated with phosphatidylserine externalization in hippocampus and delayed hippocampus-dependent learning.</title>
        <authorList>
            <person name="Levano K."/>
            <person name="Punia V."/>
            <person name="Raghunath M."/>
            <person name="Debata P.R."/>
            <person name="Curcio G.M."/>
            <person name="Mogha A."/>
            <person name="Purkayastha S."/>
            <person name="McCloskey D."/>
            <person name="Fata J."/>
            <person name="Banerjee P."/>
        </authorList>
    </citation>
    <scope>FUNCTION</scope>
    <scope>MUTAGENESIS OF ASP-409</scope>
</reference>
<reference key="11">
    <citation type="journal article" date="2013" name="J. Biol. Chem.">
        <title>Role for phospholipid flippase complex of ATP8A1 and CDC50A proteins in cell migration.</title>
        <authorList>
            <person name="Kato U."/>
            <person name="Inadome H."/>
            <person name="Yamamoto M."/>
            <person name="Emoto K."/>
            <person name="Kobayashi T."/>
            <person name="Umeda M."/>
        </authorList>
    </citation>
    <scope>FUNCTION</scope>
    <scope>FUNCTION OF THE ATP8A1:TMEM30A COMPLEX</scope>
    <scope>INTERACTION WITH TMEM30A</scope>
</reference>
<reference key="12">
    <citation type="journal article" date="2016" name="Biochim. Biophys. Acta">
        <title>Aberrant hippocampal Atp8a1 levels are associated with altered synaptic strength, electrical activity, and autistic-like behavior.</title>
        <authorList>
            <person name="Kerr D.J."/>
            <person name="Marsillo A."/>
            <person name="Guariglia S.R."/>
            <person name="Budylin T."/>
            <person name="Sadek R."/>
            <person name="Menkes S."/>
            <person name="Chauhan A."/>
            <person name="Wen G.Y."/>
            <person name="McCloskey D.P."/>
            <person name="Wieraszko A."/>
            <person name="Banerjee P."/>
        </authorList>
    </citation>
    <scope>SUBCELLULAR LOCATION</scope>
    <scope>TISSUE SPECIFICITY</scope>
    <scope>DISRUPTION PHENOTYPE</scope>
    <scope>FUNCTION</scope>
</reference>
<reference key="13">
    <citation type="journal article" date="2019" name="Blood Adv.">
        <title>Calpain cleaves phospholipid flippase ATP8A1 during apoptosis in platelets.</title>
        <authorList>
            <person name="Jing W."/>
            <person name="Yabas M."/>
            <person name="Broeer A."/>
            <person name="Coupland L."/>
            <person name="Gardiner E.E."/>
            <person name="Enders A."/>
            <person name="Broeer S."/>
        </authorList>
    </citation>
    <scope>TISSUE SPECIFICITY</scope>
    <scope>SUBCELLULAR LOCATION</scope>
    <scope>PROCESSING BY CALPAIN</scope>
</reference>
<name>AT8A1_MOUSE</name>
<comment type="function">
    <text evidence="7 9 10 11 12">Catalytic component of a P4-ATPase flippase complex which catalyzes the hydrolysis of ATP coupled to the transport of aminophospholipids from the outer to the inner leaflet of various membranes and ensures the maintenance of asymmetric distribution of phospholipids (PubMed:16618126, PubMed:20224745). Phospholipid translocation also seems to be implicated in vesicle formation and in uptake of lipid signaling molecules. In vitro, its ATPase activity is selectively and stereospecifically stimulated by phosphatidylserine (PS) (PubMed:16618126, PubMed:20224745). The flippase complex ATP8A1:TMEM30A seems to play a role in regulation of cell migration probably involving flippase-mediated translocation of phosphatidylethanolamine (PE) at the cell membrane (PubMed:23269685). Acts as aminophospholipid translocase at the cell membrane in neuronal cells; the activity is associated with hippocampus-dependent learning (PubMed:22007859). May play a role in brain connectivity (PubMed:27287255).</text>
</comment>
<comment type="catalytic activity">
    <reaction evidence="9">
        <text>ATP + H2O + phospholipidSide 1 = ADP + phosphate + phospholipidSide 2.</text>
        <dbReference type="EC" id="7.6.2.1"/>
    </reaction>
</comment>
<comment type="catalytic activity">
    <reaction evidence="9">
        <text>a 1,2-diacyl-sn-glycero-3-phospho-L-serine(out) + ATP + H2O = a 1,2-diacyl-sn-glycero-3-phospho-L-serine(in) + ADP + phosphate + H(+)</text>
        <dbReference type="Rhea" id="RHEA:38567"/>
        <dbReference type="ChEBI" id="CHEBI:15377"/>
        <dbReference type="ChEBI" id="CHEBI:15378"/>
        <dbReference type="ChEBI" id="CHEBI:30616"/>
        <dbReference type="ChEBI" id="CHEBI:43474"/>
        <dbReference type="ChEBI" id="CHEBI:57262"/>
        <dbReference type="ChEBI" id="CHEBI:456216"/>
    </reaction>
    <physiologicalReaction direction="left-to-right" evidence="17">
        <dbReference type="Rhea" id="RHEA:38568"/>
    </physiologicalReaction>
</comment>
<comment type="cofactor">
    <cofactor evidence="5">
        <name>Mg(2+)</name>
        <dbReference type="ChEBI" id="CHEBI:18420"/>
    </cofactor>
</comment>
<comment type="activity regulation">
    <text evidence="7 9">ATPase activity is stimulated by phosphatidylserine (PS) and minimally by phosphatidylethanolamine (PE) (PubMed:16618126, PubMed:20224745). ATPase activity is inhibited by the vanadate and by the presence of calcium (PubMed:20224745).</text>
</comment>
<comment type="subunit">
    <text evidence="5 11">Component of a P4-ATPase flippase complex which consists of a catalytic alpha subunit and an accessory beta subunit (PubMed:23269685). Interacts with TMEM30A to form a flippase complex; this complex forms an intermediate phosphoenzyme (PubMed:23269685). Interacts with TMEM30B; this interaction is reported conflictingly (By similarity).</text>
</comment>
<comment type="interaction">
    <interactant intactId="EBI-20828407">
        <id>P70704</id>
    </interactant>
    <interactant intactId="EBI-8381028">
        <id>Q8VEK0</id>
        <label>Tmem30a</label>
    </interactant>
    <organismsDiffer>false</organismsDiffer>
    <experiments>2</experiments>
</comment>
<comment type="subcellular location">
    <subcellularLocation>
        <location evidence="8">Cytoplasmic vesicle</location>
        <location evidence="8">Secretory vesicle</location>
        <location evidence="8">Chromaffin granule membrane</location>
        <topology evidence="6">Multi-pass membrane protein</topology>
    </subcellularLocation>
    <subcellularLocation>
        <location evidence="8">Cytoplasmic granule</location>
    </subcellularLocation>
    <subcellularLocation>
        <location evidence="12">Cell membrane</location>
    </subcellularLocation>
    <subcellularLocation>
        <location evidence="5">Endoplasmic reticulum</location>
    </subcellularLocation>
    <subcellularLocation>
        <location evidence="5">Golgi apparatus</location>
    </subcellularLocation>
    <subcellularLocation>
        <location evidence="9 12">Cytoplasmic vesicle</location>
    </subcellularLocation>
    <subcellularLocation>
        <location evidence="13">Endomembrane system</location>
    </subcellularLocation>
    <text evidence="1 8 13">Exit from the endoplasmic reticulum requires the presence of TMEM30A, but not TMEM30B. In the presence of TMEM30A, predominantly located in cytoplasmic punctate structures (By similarity). Localizes to plasma membranes of red blood cells (PubMed:16643453). Localizes predominantly in the intracellular membranes, rather than the cell membrane of platelets (PubMed:30674456).</text>
</comment>
<comment type="alternative products">
    <event type="alternative splicing"/>
    <isoform>
        <id>P70704-1</id>
        <name>1</name>
        <sequence type="displayed"/>
    </isoform>
    <isoform>
        <id>P70704-2</id>
        <name>2</name>
        <sequence type="described" ref="VSP_055306 VSP_055307"/>
    </isoform>
    <isoform>
        <id>P70704-3</id>
        <name>3</name>
        <sequence type="described" ref="VSP_055307"/>
    </isoform>
</comment>
<comment type="tissue specificity">
    <text evidence="8 12 13">Found in most tissues except liver and testis. Most abundant in brain and lung. Also detected in fetal tissues. Isoform 1 is expressed in brain. Isoform 2 and isoform 3 are expressed in reticulocytes (PubMed:16643453). Expressed in mouse hippocampus in both dentate gyrus (DG) and the CA3 regions. Expressed in both neuronal as well as non-neuronal cells within the DG (PubMed:27287255). Highly expressed in platelets (PubMed:30674456).</text>
</comment>
<comment type="PTM">
    <text evidence="13">Cleaved by calpain in a caspase- and calcium influx-dependent manner only during platelet apoptosis and may lead to inactivation.</text>
</comment>
<comment type="disruption phenotype">
    <text evidence="12">Mice overexpressing ATP8A1 in brain display an autistic-like behavior but no difference in hippocampus-dependent learning. Unlike the mice overexpressing ATP8A1,homozygous knockout mice for ATP8A1 do not show any deficits in sociability behavior.</text>
</comment>
<comment type="similarity">
    <text evidence="15">Belongs to the cation transport ATPase (P-type) (TC 3.A.3) family. Type IV subfamily.</text>
</comment>
<comment type="caution">
    <text evidence="16">Initial characterization studies with purified Atp8a1 enzyme demonstrated similar but distinct properties compared to the cell membrane aminophospholipid flippase; however, the flippase complex accessory beta subunit was not included in the assays.</text>
</comment>
<keyword id="KW-0025">Alternative splicing</keyword>
<keyword id="KW-0067">ATP-binding</keyword>
<keyword id="KW-1003">Cell membrane</keyword>
<keyword id="KW-0968">Cytoplasmic vesicle</keyword>
<keyword id="KW-0256">Endoplasmic reticulum</keyword>
<keyword id="KW-0333">Golgi apparatus</keyword>
<keyword id="KW-0445">Lipid transport</keyword>
<keyword id="KW-0460">Magnesium</keyword>
<keyword id="KW-0472">Membrane</keyword>
<keyword id="KW-0479">Metal-binding</keyword>
<keyword id="KW-0547">Nucleotide-binding</keyword>
<keyword id="KW-0597">Phosphoprotein</keyword>
<keyword id="KW-1185">Reference proteome</keyword>
<keyword id="KW-1278">Translocase</keyword>
<keyword id="KW-0812">Transmembrane</keyword>
<keyword id="KW-1133">Transmembrane helix</keyword>
<keyword id="KW-0813">Transport</keyword>
<protein>
    <recommendedName>
        <fullName evidence="15">Phospholipid-transporting ATPase IA</fullName>
        <ecNumber evidence="9">7.6.2.1</ecNumber>
    </recommendedName>
    <alternativeName>
        <fullName>ATPase class I type 8A member 1</fullName>
    </alternativeName>
    <alternativeName>
        <fullName>Chromaffin granule ATPase II</fullName>
    </alternativeName>
    <alternativeName>
        <fullName>P4-ATPase flippase complex alpha subunit ATP8A1</fullName>
    </alternativeName>
</protein>
<organism>
    <name type="scientific">Mus musculus</name>
    <name type="common">Mouse</name>
    <dbReference type="NCBI Taxonomy" id="10090"/>
    <lineage>
        <taxon>Eukaryota</taxon>
        <taxon>Metazoa</taxon>
        <taxon>Chordata</taxon>
        <taxon>Craniata</taxon>
        <taxon>Vertebrata</taxon>
        <taxon>Euteleostomi</taxon>
        <taxon>Mammalia</taxon>
        <taxon>Eutheria</taxon>
        <taxon>Euarchontoglires</taxon>
        <taxon>Glires</taxon>
        <taxon>Rodentia</taxon>
        <taxon>Myomorpha</taxon>
        <taxon>Muroidea</taxon>
        <taxon>Muridae</taxon>
        <taxon>Murinae</taxon>
        <taxon>Mus</taxon>
        <taxon>Mus</taxon>
    </lineage>
</organism>